<evidence type="ECO:0000269" key="1">
    <source>
    </source>
</evidence>
<evidence type="ECO:0000305" key="2"/>
<sequence>GLLSVLGSVAKHVLPHVVPVIAEKL</sequence>
<protein>
    <recommendedName>
        <fullName>Caerin-1.10</fullName>
    </recommendedName>
</protein>
<name>CR110_RANSP</name>
<comment type="function">
    <text evidence="1">Antibacterial peptide with wide spectrum of activity. Active against L.lactis, L.innocua, M.luteus, S.uberis and less against P.multocida and S.epidermidis.</text>
</comment>
<comment type="subcellular location">
    <subcellularLocation>
        <location>Secreted</location>
    </subcellularLocation>
</comment>
<comment type="tissue specificity">
    <text>Expressed by the skin glands.</text>
</comment>
<comment type="mass spectrometry"/>
<comment type="miscellaneous">
    <text>Caerin-1.10 is not present in the glandular secretion of female L.spendida.</text>
</comment>
<comment type="similarity">
    <text evidence="2">Belongs to the frog skin active peptide (FSAP) family. Caerin subfamily.</text>
</comment>
<dbReference type="SMR" id="P82104"/>
<dbReference type="GO" id="GO:0005576">
    <property type="term" value="C:extracellular region"/>
    <property type="evidence" value="ECO:0007669"/>
    <property type="project" value="UniProtKB-SubCell"/>
</dbReference>
<dbReference type="GO" id="GO:0042742">
    <property type="term" value="P:defense response to bacterium"/>
    <property type="evidence" value="ECO:0007669"/>
    <property type="project" value="UniProtKB-KW"/>
</dbReference>
<dbReference type="InterPro" id="IPR010000">
    <property type="entry name" value="Caerin_1"/>
</dbReference>
<dbReference type="Pfam" id="PF07440">
    <property type="entry name" value="Caerin_1"/>
    <property type="match status" value="1"/>
</dbReference>
<reference key="1">
    <citation type="journal article" date="2000" name="Eur. J. Biochem.">
        <title>Differences in the skin peptides of the male and female Australian tree frog Litoria splendida. The discovery of the aquatic male sex pheromone splendipherin, together with Phe8 caerulein and a new antibiotic peptide caerin 1.10.</title>
        <authorList>
            <person name="Wabnitz P.A."/>
            <person name="Bowie J.H."/>
            <person name="Tyler M.J."/>
            <person name="Wallace J.C."/>
            <person name="Smith B.P."/>
        </authorList>
    </citation>
    <scope>PROTEIN SEQUENCE</scope>
    <scope>AMIDATION AT LEU-25</scope>
    <scope>FUNCTION</scope>
    <scope>MASS SPECTROMETRY</scope>
    <source>
        <tissue>Skin secretion</tissue>
    </source>
</reference>
<feature type="peptide" id="PRO_0000043741" description="Caerin-1.10">
    <location>
        <begin position="1"/>
        <end position="25"/>
    </location>
</feature>
<feature type="modified residue" description="Leucine amide" evidence="1">
    <location>
        <position position="25"/>
    </location>
</feature>
<accession>P82104</accession>
<organism>
    <name type="scientific">Ranoidea splendida</name>
    <name type="common">Magnificent tree frog</name>
    <name type="synonym">Litoria splendida</name>
    <dbReference type="NCBI Taxonomy" id="30345"/>
    <lineage>
        <taxon>Eukaryota</taxon>
        <taxon>Metazoa</taxon>
        <taxon>Chordata</taxon>
        <taxon>Craniata</taxon>
        <taxon>Vertebrata</taxon>
        <taxon>Euteleostomi</taxon>
        <taxon>Amphibia</taxon>
        <taxon>Batrachia</taxon>
        <taxon>Anura</taxon>
        <taxon>Neobatrachia</taxon>
        <taxon>Hyloidea</taxon>
        <taxon>Hylidae</taxon>
        <taxon>Pelodryadinae</taxon>
        <taxon>Ranoidea</taxon>
    </lineage>
</organism>
<proteinExistence type="evidence at protein level"/>
<keyword id="KW-0027">Amidation</keyword>
<keyword id="KW-0878">Amphibian defense peptide</keyword>
<keyword id="KW-0044">Antibiotic</keyword>
<keyword id="KW-0929">Antimicrobial</keyword>
<keyword id="KW-0903">Direct protein sequencing</keyword>
<keyword id="KW-0964">Secreted</keyword>